<gene>
    <name evidence="1" type="primary">tauB2</name>
    <name type="ordered locus">Bxeno_B2292</name>
    <name type="ORF">Bxe_B0693</name>
</gene>
<accession>Q13KX9</accession>
<feature type="chain" id="PRO_0000275827" description="Taurine import ATP-binding protein TauB 2">
    <location>
        <begin position="1"/>
        <end position="271"/>
    </location>
</feature>
<feature type="domain" description="ABC transporter" evidence="1">
    <location>
        <begin position="6"/>
        <end position="237"/>
    </location>
</feature>
<feature type="binding site" evidence="1">
    <location>
        <begin position="42"/>
        <end position="49"/>
    </location>
    <ligand>
        <name>ATP</name>
        <dbReference type="ChEBI" id="CHEBI:30616"/>
    </ligand>
</feature>
<organism>
    <name type="scientific">Paraburkholderia xenovorans (strain LB400)</name>
    <dbReference type="NCBI Taxonomy" id="266265"/>
    <lineage>
        <taxon>Bacteria</taxon>
        <taxon>Pseudomonadati</taxon>
        <taxon>Pseudomonadota</taxon>
        <taxon>Betaproteobacteria</taxon>
        <taxon>Burkholderiales</taxon>
        <taxon>Burkholderiaceae</taxon>
        <taxon>Paraburkholderia</taxon>
    </lineage>
</organism>
<protein>
    <recommendedName>
        <fullName evidence="1">Taurine import ATP-binding protein TauB 2</fullName>
        <ecNumber evidence="1">7.6.2.7</ecNumber>
    </recommendedName>
</protein>
<evidence type="ECO:0000255" key="1">
    <source>
        <dbReference type="HAMAP-Rule" id="MF_01714"/>
    </source>
</evidence>
<proteinExistence type="inferred from homology"/>
<comment type="function">
    <text evidence="1">Part of the ABC transporter complex TauABC involved in taurine import. Responsible for energy coupling to the transport system.</text>
</comment>
<comment type="catalytic activity">
    <reaction evidence="1">
        <text>taurine(out) + ATP + H2O = taurine(in) + ADP + phosphate + H(+)</text>
        <dbReference type="Rhea" id="RHEA:14613"/>
        <dbReference type="ChEBI" id="CHEBI:15377"/>
        <dbReference type="ChEBI" id="CHEBI:15378"/>
        <dbReference type="ChEBI" id="CHEBI:30616"/>
        <dbReference type="ChEBI" id="CHEBI:43474"/>
        <dbReference type="ChEBI" id="CHEBI:456216"/>
        <dbReference type="ChEBI" id="CHEBI:507393"/>
        <dbReference type="EC" id="7.6.2.7"/>
    </reaction>
</comment>
<comment type="subunit">
    <text evidence="1">The complex is composed of two ATP-binding proteins (TauB), two transmembrane proteins (TauC) and a solute-binding protein (TauA).</text>
</comment>
<comment type="subcellular location">
    <subcellularLocation>
        <location evidence="1">Cell inner membrane</location>
        <topology evidence="1">Peripheral membrane protein</topology>
    </subcellularLocation>
</comment>
<comment type="similarity">
    <text evidence="1">Belongs to the ABC transporter superfamily. Taurine importer (TC 3.A.1.17.1) family.</text>
</comment>
<keyword id="KW-0067">ATP-binding</keyword>
<keyword id="KW-0997">Cell inner membrane</keyword>
<keyword id="KW-1003">Cell membrane</keyword>
<keyword id="KW-0472">Membrane</keyword>
<keyword id="KW-0547">Nucleotide-binding</keyword>
<keyword id="KW-1185">Reference proteome</keyword>
<keyword id="KW-1278">Translocase</keyword>
<keyword id="KW-0813">Transport</keyword>
<dbReference type="EC" id="7.6.2.7" evidence="1"/>
<dbReference type="EMBL" id="CP000271">
    <property type="protein sequence ID" value="ABE35260.1"/>
    <property type="molecule type" value="Genomic_DNA"/>
</dbReference>
<dbReference type="RefSeq" id="WP_011492553.1">
    <property type="nucleotide sequence ID" value="NC_007952.1"/>
</dbReference>
<dbReference type="SMR" id="Q13KX9"/>
<dbReference type="STRING" id="266265.Bxe_B0693"/>
<dbReference type="KEGG" id="bxb:DR64_6024"/>
<dbReference type="KEGG" id="bxe:Bxe_B0693"/>
<dbReference type="PATRIC" id="fig|266265.5.peg.7093"/>
<dbReference type="eggNOG" id="COG4525">
    <property type="taxonomic scope" value="Bacteria"/>
</dbReference>
<dbReference type="OrthoDB" id="9783039at2"/>
<dbReference type="Proteomes" id="UP000001817">
    <property type="component" value="Chromosome 2"/>
</dbReference>
<dbReference type="GO" id="GO:0005886">
    <property type="term" value="C:plasma membrane"/>
    <property type="evidence" value="ECO:0007669"/>
    <property type="project" value="UniProtKB-SubCell"/>
</dbReference>
<dbReference type="GO" id="GO:0015411">
    <property type="term" value="F:ABC-type taurine transporter transporter activity"/>
    <property type="evidence" value="ECO:0007669"/>
    <property type="project" value="UniProtKB-EC"/>
</dbReference>
<dbReference type="GO" id="GO:0005524">
    <property type="term" value="F:ATP binding"/>
    <property type="evidence" value="ECO:0007669"/>
    <property type="project" value="UniProtKB-KW"/>
</dbReference>
<dbReference type="GO" id="GO:0016887">
    <property type="term" value="F:ATP hydrolysis activity"/>
    <property type="evidence" value="ECO:0007669"/>
    <property type="project" value="InterPro"/>
</dbReference>
<dbReference type="CDD" id="cd03293">
    <property type="entry name" value="ABC_NrtD_SsuB_transporters"/>
    <property type="match status" value="1"/>
</dbReference>
<dbReference type="Gene3D" id="3.40.50.300">
    <property type="entry name" value="P-loop containing nucleotide triphosphate hydrolases"/>
    <property type="match status" value="1"/>
</dbReference>
<dbReference type="InterPro" id="IPR003593">
    <property type="entry name" value="AAA+_ATPase"/>
</dbReference>
<dbReference type="InterPro" id="IPR003439">
    <property type="entry name" value="ABC_transporter-like_ATP-bd"/>
</dbReference>
<dbReference type="InterPro" id="IPR017871">
    <property type="entry name" value="ABC_transporter-like_CS"/>
</dbReference>
<dbReference type="InterPro" id="IPR050166">
    <property type="entry name" value="ABC_transporter_ATP-bind"/>
</dbReference>
<dbReference type="InterPro" id="IPR027417">
    <property type="entry name" value="P-loop_NTPase"/>
</dbReference>
<dbReference type="PANTHER" id="PTHR42788:SF18">
    <property type="entry name" value="TAURINE IMPORT ATP-BINDING PROTEIN TAUB"/>
    <property type="match status" value="1"/>
</dbReference>
<dbReference type="PANTHER" id="PTHR42788">
    <property type="entry name" value="TAURINE IMPORT ATP-BINDING PROTEIN-RELATED"/>
    <property type="match status" value="1"/>
</dbReference>
<dbReference type="Pfam" id="PF00005">
    <property type="entry name" value="ABC_tran"/>
    <property type="match status" value="1"/>
</dbReference>
<dbReference type="SMART" id="SM00382">
    <property type="entry name" value="AAA"/>
    <property type="match status" value="1"/>
</dbReference>
<dbReference type="SUPFAM" id="SSF52540">
    <property type="entry name" value="P-loop containing nucleoside triphosphate hydrolases"/>
    <property type="match status" value="1"/>
</dbReference>
<dbReference type="PROSITE" id="PS00211">
    <property type="entry name" value="ABC_TRANSPORTER_1"/>
    <property type="match status" value="1"/>
</dbReference>
<dbReference type="PROSITE" id="PS50893">
    <property type="entry name" value="ABC_TRANSPORTER_2"/>
    <property type="match status" value="1"/>
</dbReference>
<dbReference type="PROSITE" id="PS51250">
    <property type="entry name" value="TAUB"/>
    <property type="match status" value="1"/>
</dbReference>
<reference key="1">
    <citation type="journal article" date="2006" name="Proc. Natl. Acad. Sci. U.S.A.">
        <title>Burkholderia xenovorans LB400 harbors a multi-replicon, 9.73-Mbp genome shaped for versatility.</title>
        <authorList>
            <person name="Chain P.S.G."/>
            <person name="Denef V.J."/>
            <person name="Konstantinidis K.T."/>
            <person name="Vergez L.M."/>
            <person name="Agullo L."/>
            <person name="Reyes V.L."/>
            <person name="Hauser L."/>
            <person name="Cordova M."/>
            <person name="Gomez L."/>
            <person name="Gonzalez M."/>
            <person name="Land M."/>
            <person name="Lao V."/>
            <person name="Larimer F."/>
            <person name="LiPuma J.J."/>
            <person name="Mahenthiralingam E."/>
            <person name="Malfatti S.A."/>
            <person name="Marx C.J."/>
            <person name="Parnell J.J."/>
            <person name="Ramette A."/>
            <person name="Richardson P."/>
            <person name="Seeger M."/>
            <person name="Smith D."/>
            <person name="Spilker T."/>
            <person name="Sul W.J."/>
            <person name="Tsoi T.V."/>
            <person name="Ulrich L.E."/>
            <person name="Zhulin I.B."/>
            <person name="Tiedje J.M."/>
        </authorList>
    </citation>
    <scope>NUCLEOTIDE SEQUENCE [LARGE SCALE GENOMIC DNA]</scope>
    <source>
        <strain>LB400</strain>
    </source>
</reference>
<sequence length="271" mass="29780">MENMTVRNVSVVFPGRGPGQTVQALDDINLTIRSGDFVVALGASGCGKTTLLSLMAGFIAPSRGELLLGGEPIAGPGADRGVVFQKHALLPWLNVIDNAEFGLKLQGVPRAQRRDIAVRNLALVGLQDFHKHMIYQLSGGMQQRVGIARALTCDPAMLLMDEPMAALDALTRETIQELLLDVWKKTSKMFFFITHSVEEALFLASRLIVMSPRPGRITHTYDLDFNRRFLETRDARAIKSSPDFIAMRERVLNIIYGDEKMHAAGAGVAHV</sequence>
<name>TAUB2_PARXL</name>